<evidence type="ECO:0000255" key="1">
    <source>
        <dbReference type="HAMAP-Rule" id="MF_01445"/>
    </source>
</evidence>
<dbReference type="EC" id="2.3.1.234" evidence="1"/>
<dbReference type="EMBL" id="FM204883">
    <property type="protein sequence ID" value="CAW92491.1"/>
    <property type="molecule type" value="Genomic_DNA"/>
</dbReference>
<dbReference type="RefSeq" id="WP_012678539.1">
    <property type="nucleotide sequence ID" value="NC_012471.1"/>
</dbReference>
<dbReference type="SMR" id="C0M9J5"/>
<dbReference type="KEGG" id="seu:SEQ_0361"/>
<dbReference type="HOGENOM" id="CLU_023208_0_2_9"/>
<dbReference type="OrthoDB" id="9806197at2"/>
<dbReference type="Proteomes" id="UP000001365">
    <property type="component" value="Chromosome"/>
</dbReference>
<dbReference type="GO" id="GO:0005737">
    <property type="term" value="C:cytoplasm"/>
    <property type="evidence" value="ECO:0007669"/>
    <property type="project" value="UniProtKB-SubCell"/>
</dbReference>
<dbReference type="GO" id="GO:0005506">
    <property type="term" value="F:iron ion binding"/>
    <property type="evidence" value="ECO:0007669"/>
    <property type="project" value="UniProtKB-UniRule"/>
</dbReference>
<dbReference type="GO" id="GO:0061711">
    <property type="term" value="F:N(6)-L-threonylcarbamoyladenine synthase activity"/>
    <property type="evidence" value="ECO:0007669"/>
    <property type="project" value="UniProtKB-EC"/>
</dbReference>
<dbReference type="GO" id="GO:0002949">
    <property type="term" value="P:tRNA threonylcarbamoyladenosine modification"/>
    <property type="evidence" value="ECO:0007669"/>
    <property type="project" value="UniProtKB-UniRule"/>
</dbReference>
<dbReference type="CDD" id="cd24133">
    <property type="entry name" value="ASKHA_NBD_TsaD_bac"/>
    <property type="match status" value="1"/>
</dbReference>
<dbReference type="FunFam" id="3.30.420.40:FF:000012">
    <property type="entry name" value="tRNA N6-adenosine threonylcarbamoyltransferase"/>
    <property type="match status" value="1"/>
</dbReference>
<dbReference type="FunFam" id="3.30.420.40:FF:000040">
    <property type="entry name" value="tRNA N6-adenosine threonylcarbamoyltransferase"/>
    <property type="match status" value="1"/>
</dbReference>
<dbReference type="Gene3D" id="3.30.420.40">
    <property type="match status" value="2"/>
</dbReference>
<dbReference type="HAMAP" id="MF_01445">
    <property type="entry name" value="TsaD"/>
    <property type="match status" value="1"/>
</dbReference>
<dbReference type="InterPro" id="IPR043129">
    <property type="entry name" value="ATPase_NBD"/>
</dbReference>
<dbReference type="InterPro" id="IPR000905">
    <property type="entry name" value="Gcp-like_dom"/>
</dbReference>
<dbReference type="InterPro" id="IPR017861">
    <property type="entry name" value="KAE1/TsaD"/>
</dbReference>
<dbReference type="InterPro" id="IPR022450">
    <property type="entry name" value="TsaD"/>
</dbReference>
<dbReference type="NCBIfam" id="TIGR00329">
    <property type="entry name" value="gcp_kae1"/>
    <property type="match status" value="1"/>
</dbReference>
<dbReference type="NCBIfam" id="TIGR03723">
    <property type="entry name" value="T6A_TsaD_YgjD"/>
    <property type="match status" value="1"/>
</dbReference>
<dbReference type="PANTHER" id="PTHR11735">
    <property type="entry name" value="TRNA N6-ADENOSINE THREONYLCARBAMOYLTRANSFERASE"/>
    <property type="match status" value="1"/>
</dbReference>
<dbReference type="PANTHER" id="PTHR11735:SF6">
    <property type="entry name" value="TRNA N6-ADENOSINE THREONYLCARBAMOYLTRANSFERASE, MITOCHONDRIAL"/>
    <property type="match status" value="1"/>
</dbReference>
<dbReference type="Pfam" id="PF00814">
    <property type="entry name" value="TsaD"/>
    <property type="match status" value="1"/>
</dbReference>
<dbReference type="PRINTS" id="PR00789">
    <property type="entry name" value="OSIALOPTASE"/>
</dbReference>
<dbReference type="SUPFAM" id="SSF53067">
    <property type="entry name" value="Actin-like ATPase domain"/>
    <property type="match status" value="1"/>
</dbReference>
<name>TSAD_STRE4</name>
<accession>C0M9J5</accession>
<organism>
    <name type="scientific">Streptococcus equi subsp. equi (strain 4047)</name>
    <dbReference type="NCBI Taxonomy" id="553482"/>
    <lineage>
        <taxon>Bacteria</taxon>
        <taxon>Bacillati</taxon>
        <taxon>Bacillota</taxon>
        <taxon>Bacilli</taxon>
        <taxon>Lactobacillales</taxon>
        <taxon>Streptococcaceae</taxon>
        <taxon>Streptococcus</taxon>
    </lineage>
</organism>
<gene>
    <name evidence="1" type="primary">tsaD</name>
    <name type="synonym">gcp</name>
    <name type="ordered locus">SEQ_0361</name>
</gene>
<protein>
    <recommendedName>
        <fullName evidence="1">tRNA N6-adenosine threonylcarbamoyltransferase</fullName>
        <ecNumber evidence="1">2.3.1.234</ecNumber>
    </recommendedName>
    <alternativeName>
        <fullName evidence="1">N6-L-threonylcarbamoyladenine synthase</fullName>
        <shortName evidence="1">t(6)A synthase</shortName>
    </alternativeName>
    <alternativeName>
        <fullName evidence="1">t(6)A37 threonylcarbamoyladenosine biosynthesis protein TsaD</fullName>
    </alternativeName>
    <alternativeName>
        <fullName evidence="1">tRNA threonylcarbamoyladenosine biosynthesis protein TsaD</fullName>
    </alternativeName>
</protein>
<comment type="function">
    <text evidence="1">Required for the formation of a threonylcarbamoyl group on adenosine at position 37 (t(6)A37) in tRNAs that read codons beginning with adenine. Is involved in the transfer of the threonylcarbamoyl moiety of threonylcarbamoyl-AMP (TC-AMP) to the N6 group of A37, together with TsaE and TsaB. TsaD likely plays a direct catalytic role in this reaction.</text>
</comment>
<comment type="catalytic activity">
    <reaction evidence="1">
        <text>L-threonylcarbamoyladenylate + adenosine(37) in tRNA = N(6)-L-threonylcarbamoyladenosine(37) in tRNA + AMP + H(+)</text>
        <dbReference type="Rhea" id="RHEA:37059"/>
        <dbReference type="Rhea" id="RHEA-COMP:10162"/>
        <dbReference type="Rhea" id="RHEA-COMP:10163"/>
        <dbReference type="ChEBI" id="CHEBI:15378"/>
        <dbReference type="ChEBI" id="CHEBI:73682"/>
        <dbReference type="ChEBI" id="CHEBI:74411"/>
        <dbReference type="ChEBI" id="CHEBI:74418"/>
        <dbReference type="ChEBI" id="CHEBI:456215"/>
        <dbReference type="EC" id="2.3.1.234"/>
    </reaction>
</comment>
<comment type="cofactor">
    <cofactor evidence="1">
        <name>Fe(2+)</name>
        <dbReference type="ChEBI" id="CHEBI:29033"/>
    </cofactor>
    <text evidence="1">Binds 1 Fe(2+) ion per subunit.</text>
</comment>
<comment type="subcellular location">
    <subcellularLocation>
        <location evidence="1">Cytoplasm</location>
    </subcellularLocation>
</comment>
<comment type="similarity">
    <text evidence="1">Belongs to the KAE1 / TsaD family.</text>
</comment>
<sequence length="338" mass="36463">MTDRYILAVESSCDETSVAILKNDNVLLTNIIASQVESHKRFGGVVPEVASRHHVEVITTCFDDALKEAQLEASDLTAVAVTYGPGLVGALLVGLAAAKAFAWANDLPLIPVNHMAGHLMAAREQGELEYPLMALLVSGGHTELVYVTEPGEYHIVGETRDDAVGEAYDKVGRVMGLPYPAGREIDQLAHQGTDTYHFPRAMMKEDHLEFSFSGLKSAFINLHHNAQQKGEELVLEDLCASFQAAVLDILLAKTKKALKQYPSKMLVVAGGVAANQGLRERLAEEITDIAVVIPPLRLCGDNAGMIALAAVVEYEKGHVAGLDLNAKPSLAFDSFHQQ</sequence>
<proteinExistence type="inferred from homology"/>
<feature type="chain" id="PRO_1000184981" description="tRNA N6-adenosine threonylcarbamoyltransferase">
    <location>
        <begin position="1"/>
        <end position="338"/>
    </location>
</feature>
<feature type="binding site" evidence="1">
    <location>
        <position position="114"/>
    </location>
    <ligand>
        <name>Fe cation</name>
        <dbReference type="ChEBI" id="CHEBI:24875"/>
    </ligand>
</feature>
<feature type="binding site" evidence="1">
    <location>
        <position position="118"/>
    </location>
    <ligand>
        <name>Fe cation</name>
        <dbReference type="ChEBI" id="CHEBI:24875"/>
    </ligand>
</feature>
<feature type="binding site" evidence="1">
    <location>
        <begin position="136"/>
        <end position="140"/>
    </location>
    <ligand>
        <name>substrate</name>
    </ligand>
</feature>
<feature type="binding site" evidence="1">
    <location>
        <position position="169"/>
    </location>
    <ligand>
        <name>substrate</name>
    </ligand>
</feature>
<feature type="binding site" evidence="1">
    <location>
        <position position="182"/>
    </location>
    <ligand>
        <name>substrate</name>
    </ligand>
</feature>
<feature type="binding site" evidence="1">
    <location>
        <position position="186"/>
    </location>
    <ligand>
        <name>substrate</name>
    </ligand>
</feature>
<feature type="binding site" evidence="1">
    <location>
        <position position="275"/>
    </location>
    <ligand>
        <name>substrate</name>
    </ligand>
</feature>
<feature type="binding site" evidence="1">
    <location>
        <position position="301"/>
    </location>
    <ligand>
        <name>Fe cation</name>
        <dbReference type="ChEBI" id="CHEBI:24875"/>
    </ligand>
</feature>
<reference key="1">
    <citation type="journal article" date="2009" name="PLoS Pathog.">
        <title>Genomic evidence for the evolution of Streptococcus equi: host restriction, increased virulence, and genetic exchange with human pathogens.</title>
        <authorList>
            <person name="Holden M.T.G."/>
            <person name="Heather Z."/>
            <person name="Paillot R."/>
            <person name="Steward K.F."/>
            <person name="Webb K."/>
            <person name="Ainslie F."/>
            <person name="Jourdan T."/>
            <person name="Bason N.C."/>
            <person name="Holroyd N.E."/>
            <person name="Mungall K."/>
            <person name="Quail M.A."/>
            <person name="Sanders M."/>
            <person name="Simmonds M."/>
            <person name="Willey D."/>
            <person name="Brooks K."/>
            <person name="Aanensen D.M."/>
            <person name="Spratt B.G."/>
            <person name="Jolley K.A."/>
            <person name="Maiden M.C.J."/>
            <person name="Kehoe M."/>
            <person name="Chanter N."/>
            <person name="Bentley S.D."/>
            <person name="Robinson C."/>
            <person name="Maskell D.J."/>
            <person name="Parkhill J."/>
            <person name="Waller A.S."/>
        </authorList>
    </citation>
    <scope>NUCLEOTIDE SEQUENCE [LARGE SCALE GENOMIC DNA]</scope>
    <source>
        <strain>4047</strain>
    </source>
</reference>
<keyword id="KW-0012">Acyltransferase</keyword>
<keyword id="KW-0963">Cytoplasm</keyword>
<keyword id="KW-0408">Iron</keyword>
<keyword id="KW-0479">Metal-binding</keyword>
<keyword id="KW-0808">Transferase</keyword>
<keyword id="KW-0819">tRNA processing</keyword>